<proteinExistence type="inferred from homology"/>
<organism>
    <name type="scientific">Bacillus subtilis (strain 168)</name>
    <dbReference type="NCBI Taxonomy" id="224308"/>
    <lineage>
        <taxon>Bacteria</taxon>
        <taxon>Bacillati</taxon>
        <taxon>Bacillota</taxon>
        <taxon>Bacilli</taxon>
        <taxon>Bacillales</taxon>
        <taxon>Bacillaceae</taxon>
        <taxon>Bacillus</taxon>
    </lineage>
</organism>
<gene>
    <name evidence="1" type="primary">purE</name>
    <name type="ordered locus">BSU06420</name>
</gene>
<comment type="function">
    <text evidence="1">Catalyzes the conversion of N5-carboxyaminoimidazole ribonucleotide (N5-CAIR) to 4-carboxy-5-aminoimidazole ribonucleotide (CAIR).</text>
</comment>
<comment type="catalytic activity">
    <reaction evidence="1">
        <text>5-carboxyamino-1-(5-phospho-D-ribosyl)imidazole + H(+) = 5-amino-1-(5-phospho-D-ribosyl)imidazole-4-carboxylate</text>
        <dbReference type="Rhea" id="RHEA:13193"/>
        <dbReference type="ChEBI" id="CHEBI:15378"/>
        <dbReference type="ChEBI" id="CHEBI:58730"/>
        <dbReference type="ChEBI" id="CHEBI:77657"/>
        <dbReference type="EC" id="5.4.99.18"/>
    </reaction>
</comment>
<comment type="pathway">
    <text evidence="1">Purine metabolism; IMP biosynthesis via de novo pathway; 5-amino-1-(5-phospho-D-ribosyl)imidazole-4-carboxylate from 5-amino-1-(5-phospho-D-ribosyl)imidazole (N5-CAIR route): step 2/2.</text>
</comment>
<comment type="similarity">
    <text evidence="1">Belongs to the AIR carboxylase family. Class I subfamily.</text>
</comment>
<dbReference type="EC" id="5.4.99.18" evidence="1"/>
<dbReference type="EMBL" id="J02732">
    <property type="protein sequence ID" value="AAA22674.1"/>
    <property type="molecule type" value="Genomic_DNA"/>
</dbReference>
<dbReference type="EMBL" id="AL009126">
    <property type="protein sequence ID" value="CAB12462.1"/>
    <property type="molecule type" value="Genomic_DNA"/>
</dbReference>
<dbReference type="EMBL" id="U51115">
    <property type="protein sequence ID" value="AAB62318.1"/>
    <property type="molecule type" value="Genomic_DNA"/>
</dbReference>
<dbReference type="PIR" id="A29326">
    <property type="entry name" value="DEBSPE"/>
</dbReference>
<dbReference type="RefSeq" id="NP_388524.1">
    <property type="nucleotide sequence ID" value="NC_000964.3"/>
</dbReference>
<dbReference type="RefSeq" id="WP_003244134.1">
    <property type="nucleotide sequence ID" value="NZ_OZ025638.1"/>
</dbReference>
<dbReference type="SMR" id="P12044"/>
<dbReference type="FunCoup" id="P12044">
    <property type="interactions" value="422"/>
</dbReference>
<dbReference type="IntAct" id="P12044">
    <property type="interactions" value="1"/>
</dbReference>
<dbReference type="MINT" id="P12044"/>
<dbReference type="STRING" id="224308.BSU06420"/>
<dbReference type="PaxDb" id="224308-BSU06420"/>
<dbReference type="EnsemblBacteria" id="CAB12462">
    <property type="protein sequence ID" value="CAB12462"/>
    <property type="gene ID" value="BSU_06420"/>
</dbReference>
<dbReference type="GeneID" id="939481"/>
<dbReference type="KEGG" id="bsu:BSU06420"/>
<dbReference type="PATRIC" id="fig|224308.179.peg.698"/>
<dbReference type="eggNOG" id="COG0041">
    <property type="taxonomic scope" value="Bacteria"/>
</dbReference>
<dbReference type="InParanoid" id="P12044"/>
<dbReference type="OrthoDB" id="9791908at2"/>
<dbReference type="PhylomeDB" id="P12044"/>
<dbReference type="BioCyc" id="BSUB:BSU06420-MONOMER"/>
<dbReference type="UniPathway" id="UPA00074">
    <property type="reaction ID" value="UER00943"/>
</dbReference>
<dbReference type="Proteomes" id="UP000001570">
    <property type="component" value="Chromosome"/>
</dbReference>
<dbReference type="GO" id="GO:0034023">
    <property type="term" value="F:5-(carboxyamino)imidazole ribonucleotide mutase activity"/>
    <property type="evidence" value="ECO:0007669"/>
    <property type="project" value="UniProtKB-UniRule"/>
</dbReference>
<dbReference type="GO" id="GO:0006189">
    <property type="term" value="P:'de novo' IMP biosynthetic process"/>
    <property type="evidence" value="ECO:0007669"/>
    <property type="project" value="UniProtKB-UniRule"/>
</dbReference>
<dbReference type="Gene3D" id="3.40.50.1970">
    <property type="match status" value="1"/>
</dbReference>
<dbReference type="HAMAP" id="MF_01929">
    <property type="entry name" value="PurE_classI"/>
    <property type="match status" value="1"/>
</dbReference>
<dbReference type="InterPro" id="IPR033747">
    <property type="entry name" value="PurE_ClassI"/>
</dbReference>
<dbReference type="InterPro" id="IPR000031">
    <property type="entry name" value="PurE_dom"/>
</dbReference>
<dbReference type="InterPro" id="IPR024694">
    <property type="entry name" value="PurE_prokaryotes"/>
</dbReference>
<dbReference type="NCBIfam" id="TIGR01162">
    <property type="entry name" value="purE"/>
    <property type="match status" value="1"/>
</dbReference>
<dbReference type="PANTHER" id="PTHR23046:SF2">
    <property type="entry name" value="PHOSPHORIBOSYLAMINOIMIDAZOLE CARBOXYLASE"/>
    <property type="match status" value="1"/>
</dbReference>
<dbReference type="PANTHER" id="PTHR23046">
    <property type="entry name" value="PHOSPHORIBOSYLAMINOIMIDAZOLE CARBOXYLASE CATALYTIC SUBUNIT"/>
    <property type="match status" value="1"/>
</dbReference>
<dbReference type="Pfam" id="PF00731">
    <property type="entry name" value="AIRC"/>
    <property type="match status" value="1"/>
</dbReference>
<dbReference type="PIRSF" id="PIRSF001338">
    <property type="entry name" value="AIR_carboxylase"/>
    <property type="match status" value="1"/>
</dbReference>
<dbReference type="SMART" id="SM01001">
    <property type="entry name" value="AIRC"/>
    <property type="match status" value="1"/>
</dbReference>
<dbReference type="SUPFAM" id="SSF52255">
    <property type="entry name" value="N5-CAIR mutase (phosphoribosylaminoimidazole carboxylase, PurE)"/>
    <property type="match status" value="1"/>
</dbReference>
<protein>
    <recommendedName>
        <fullName evidence="1">N5-carboxyaminoimidazole ribonucleotide mutase</fullName>
        <shortName evidence="1">N5-CAIR mutase</shortName>
        <ecNumber evidence="1">5.4.99.18</ecNumber>
    </recommendedName>
    <alternativeName>
        <fullName evidence="1">5-(carboxyamino)imidazole ribonucleotide mutase</fullName>
    </alternativeName>
</protein>
<keyword id="KW-0413">Isomerase</keyword>
<keyword id="KW-0658">Purine biosynthesis</keyword>
<keyword id="KW-1185">Reference proteome</keyword>
<reference key="1">
    <citation type="journal article" date="1987" name="J. Biol. Chem.">
        <title>Cloning and characterization of a 12-gene cluster from Bacillus subtilis encoding nine enzymes for de novo purine nucleotide synthesis.</title>
        <authorList>
            <person name="Ebbole D.J."/>
            <person name="Zalkin H."/>
        </authorList>
    </citation>
    <scope>NUCLEOTIDE SEQUENCE [GENOMIC DNA]</scope>
</reference>
<reference key="2">
    <citation type="journal article" date="1997" name="Nature">
        <title>The complete genome sequence of the Gram-positive bacterium Bacillus subtilis.</title>
        <authorList>
            <person name="Kunst F."/>
            <person name="Ogasawara N."/>
            <person name="Moszer I."/>
            <person name="Albertini A.M."/>
            <person name="Alloni G."/>
            <person name="Azevedo V."/>
            <person name="Bertero M.G."/>
            <person name="Bessieres P."/>
            <person name="Bolotin A."/>
            <person name="Borchert S."/>
            <person name="Borriss R."/>
            <person name="Boursier L."/>
            <person name="Brans A."/>
            <person name="Braun M."/>
            <person name="Brignell S.C."/>
            <person name="Bron S."/>
            <person name="Brouillet S."/>
            <person name="Bruschi C.V."/>
            <person name="Caldwell B."/>
            <person name="Capuano V."/>
            <person name="Carter N.M."/>
            <person name="Choi S.-K."/>
            <person name="Codani J.-J."/>
            <person name="Connerton I.F."/>
            <person name="Cummings N.J."/>
            <person name="Daniel R.A."/>
            <person name="Denizot F."/>
            <person name="Devine K.M."/>
            <person name="Duesterhoeft A."/>
            <person name="Ehrlich S.D."/>
            <person name="Emmerson P.T."/>
            <person name="Entian K.-D."/>
            <person name="Errington J."/>
            <person name="Fabret C."/>
            <person name="Ferrari E."/>
            <person name="Foulger D."/>
            <person name="Fritz C."/>
            <person name="Fujita M."/>
            <person name="Fujita Y."/>
            <person name="Fuma S."/>
            <person name="Galizzi A."/>
            <person name="Galleron N."/>
            <person name="Ghim S.-Y."/>
            <person name="Glaser P."/>
            <person name="Goffeau A."/>
            <person name="Golightly E.J."/>
            <person name="Grandi G."/>
            <person name="Guiseppi G."/>
            <person name="Guy B.J."/>
            <person name="Haga K."/>
            <person name="Haiech J."/>
            <person name="Harwood C.R."/>
            <person name="Henaut A."/>
            <person name="Hilbert H."/>
            <person name="Holsappel S."/>
            <person name="Hosono S."/>
            <person name="Hullo M.-F."/>
            <person name="Itaya M."/>
            <person name="Jones L.-M."/>
            <person name="Joris B."/>
            <person name="Karamata D."/>
            <person name="Kasahara Y."/>
            <person name="Klaerr-Blanchard M."/>
            <person name="Klein C."/>
            <person name="Kobayashi Y."/>
            <person name="Koetter P."/>
            <person name="Koningstein G."/>
            <person name="Krogh S."/>
            <person name="Kumano M."/>
            <person name="Kurita K."/>
            <person name="Lapidus A."/>
            <person name="Lardinois S."/>
            <person name="Lauber J."/>
            <person name="Lazarevic V."/>
            <person name="Lee S.-M."/>
            <person name="Levine A."/>
            <person name="Liu H."/>
            <person name="Masuda S."/>
            <person name="Mauel C."/>
            <person name="Medigue C."/>
            <person name="Medina N."/>
            <person name="Mellado R.P."/>
            <person name="Mizuno M."/>
            <person name="Moestl D."/>
            <person name="Nakai S."/>
            <person name="Noback M."/>
            <person name="Noone D."/>
            <person name="O'Reilly M."/>
            <person name="Ogawa K."/>
            <person name="Ogiwara A."/>
            <person name="Oudega B."/>
            <person name="Park S.-H."/>
            <person name="Parro V."/>
            <person name="Pohl T.M."/>
            <person name="Portetelle D."/>
            <person name="Porwollik S."/>
            <person name="Prescott A.M."/>
            <person name="Presecan E."/>
            <person name="Pujic P."/>
            <person name="Purnelle B."/>
            <person name="Rapoport G."/>
            <person name="Rey M."/>
            <person name="Reynolds S."/>
            <person name="Rieger M."/>
            <person name="Rivolta C."/>
            <person name="Rocha E."/>
            <person name="Roche B."/>
            <person name="Rose M."/>
            <person name="Sadaie Y."/>
            <person name="Sato T."/>
            <person name="Scanlan E."/>
            <person name="Schleich S."/>
            <person name="Schroeter R."/>
            <person name="Scoffone F."/>
            <person name="Sekiguchi J."/>
            <person name="Sekowska A."/>
            <person name="Seror S.J."/>
            <person name="Serror P."/>
            <person name="Shin B.-S."/>
            <person name="Soldo B."/>
            <person name="Sorokin A."/>
            <person name="Tacconi E."/>
            <person name="Takagi T."/>
            <person name="Takahashi H."/>
            <person name="Takemaru K."/>
            <person name="Takeuchi M."/>
            <person name="Tamakoshi A."/>
            <person name="Tanaka T."/>
            <person name="Terpstra P."/>
            <person name="Tognoni A."/>
            <person name="Tosato V."/>
            <person name="Uchiyama S."/>
            <person name="Vandenbol M."/>
            <person name="Vannier F."/>
            <person name="Vassarotti A."/>
            <person name="Viari A."/>
            <person name="Wambutt R."/>
            <person name="Wedler E."/>
            <person name="Wedler H."/>
            <person name="Weitzenegger T."/>
            <person name="Winters P."/>
            <person name="Wipat A."/>
            <person name="Yamamoto H."/>
            <person name="Yamane K."/>
            <person name="Yasumoto K."/>
            <person name="Yata K."/>
            <person name="Yoshida K."/>
            <person name="Yoshikawa H.-F."/>
            <person name="Zumstein E."/>
            <person name="Yoshikawa H."/>
            <person name="Danchin A."/>
        </authorList>
    </citation>
    <scope>NUCLEOTIDE SEQUENCE [LARGE SCALE GENOMIC DNA]</scope>
    <source>
        <strain>168</strain>
    </source>
</reference>
<reference key="3">
    <citation type="submission" date="1996-12" db="EMBL/GenBank/DDBJ databases">
        <authorList>
            <person name="Borriss R."/>
            <person name="Porwollik S."/>
            <person name="Schroeter R."/>
            <person name="Hahstedt C."/>
            <person name="Mueller C."/>
        </authorList>
    </citation>
    <scope>NUCLEOTIDE SEQUENCE [GENOMIC DNA] OF 1-22</scope>
    <source>
        <strain>168</strain>
    </source>
</reference>
<evidence type="ECO:0000255" key="1">
    <source>
        <dbReference type="HAMAP-Rule" id="MF_01929"/>
    </source>
</evidence>
<feature type="chain" id="PRO_0000074969" description="N5-carboxyaminoimidazole ribonucleotide mutase">
    <location>
        <begin position="1"/>
        <end position="162"/>
    </location>
</feature>
<feature type="binding site" evidence="1">
    <location>
        <position position="11"/>
    </location>
    <ligand>
        <name>substrate</name>
    </ligand>
</feature>
<feature type="binding site" evidence="1">
    <location>
        <position position="14"/>
    </location>
    <ligand>
        <name>substrate</name>
    </ligand>
</feature>
<feature type="binding site" evidence="1">
    <location>
        <position position="41"/>
    </location>
    <ligand>
        <name>substrate</name>
    </ligand>
</feature>
<sequence>MQPLVGIIMGSTSDWETMKHACDILDELNVPYEKKVVSAHRTPDFMFEYAETARERGIKVIIAGAGGAAHLPGMTAAKTTLPVIGVPVQSKALNGMDSLLSIVQMPGGVPVATTSIGKAGAVNAGLLAAQILSAFDEDLARKLDERRENTKQTVLESSDQLV</sequence>
<name>PURE_BACSU</name>
<accession>P12044</accession>